<sequence length="370" mass="42188">MVGKLKQNLLLACLVISSVTVFYLGQHAMECHHRIEERSQPVKLESTRTTVRTGLDLKANKTFAYHKDMPLIFIGGVPRSGTTLMRAMLDAHPDIRCGEETRVIPRILALKQMWSRSSKEKIRLDEAGVTDEVLDSAMQAFLLEIIVKHGEPAPYLCNKDPFALKSLTYLSRLFPNAKFLLMVRDGRASVHSMISRKVTIAGFDLNSYRDCLTKWNRAIETMYNQCMEVGYKKCMLVHYEQLVLHPERWMRTLLKFLQIPWNHSVLHHEEMIGKAGGVSLSKVERSTDQVIKPVNVGALSKWVGKIPPDVLQDMAVIAPMLAKLGYDPYANPPNYGKPDPKIIENTRRVYKGEFQLPDFLKEKPQTEQVE</sequence>
<gene>
    <name type="primary">TPST1</name>
</gene>
<keyword id="KW-0002">3D-structure</keyword>
<keyword id="KW-1015">Disulfide bond</keyword>
<keyword id="KW-0325">Glycoprotein</keyword>
<keyword id="KW-0333">Golgi apparatus</keyword>
<keyword id="KW-0472">Membrane</keyword>
<keyword id="KW-1267">Proteomics identification</keyword>
<keyword id="KW-1185">Reference proteome</keyword>
<keyword id="KW-0735">Signal-anchor</keyword>
<keyword id="KW-0808">Transferase</keyword>
<keyword id="KW-0812">Transmembrane</keyword>
<keyword id="KW-1133">Transmembrane helix</keyword>
<reference key="1">
    <citation type="journal article" date="1998" name="Proc. Natl. Acad. Sci. U.S.A.">
        <title>Tyrosylprotein sulfotransferase: purification and molecular cloning of an enzyme that catalyzes tyrosine O-sulfation, a common posttranslational modification of eukaryotic proteins.</title>
        <authorList>
            <person name="Ouyang Y.-B."/>
            <person name="Lane W.S."/>
            <person name="Moore K.L."/>
        </authorList>
    </citation>
    <scope>NUCLEOTIDE SEQUENCE [MRNA]</scope>
    <scope>FUNCTION</scope>
    <scope>CATALYTIC ACTIVITY</scope>
    <scope>GLYCOSYLATION</scope>
    <scope>TISSUE SPECIFICITY</scope>
</reference>
<reference key="2">
    <citation type="journal article" date="2004" name="Nat. Genet.">
        <title>Complete sequencing and characterization of 21,243 full-length human cDNAs.</title>
        <authorList>
            <person name="Ota T."/>
            <person name="Suzuki Y."/>
            <person name="Nishikawa T."/>
            <person name="Otsuki T."/>
            <person name="Sugiyama T."/>
            <person name="Irie R."/>
            <person name="Wakamatsu A."/>
            <person name="Hayashi K."/>
            <person name="Sato H."/>
            <person name="Nagai K."/>
            <person name="Kimura K."/>
            <person name="Makita H."/>
            <person name="Sekine M."/>
            <person name="Obayashi M."/>
            <person name="Nishi T."/>
            <person name="Shibahara T."/>
            <person name="Tanaka T."/>
            <person name="Ishii S."/>
            <person name="Yamamoto J."/>
            <person name="Saito K."/>
            <person name="Kawai Y."/>
            <person name="Isono Y."/>
            <person name="Nakamura Y."/>
            <person name="Nagahari K."/>
            <person name="Murakami K."/>
            <person name="Yasuda T."/>
            <person name="Iwayanagi T."/>
            <person name="Wagatsuma M."/>
            <person name="Shiratori A."/>
            <person name="Sudo H."/>
            <person name="Hosoiri T."/>
            <person name="Kaku Y."/>
            <person name="Kodaira H."/>
            <person name="Kondo H."/>
            <person name="Sugawara M."/>
            <person name="Takahashi M."/>
            <person name="Kanda K."/>
            <person name="Yokoi T."/>
            <person name="Furuya T."/>
            <person name="Kikkawa E."/>
            <person name="Omura Y."/>
            <person name="Abe K."/>
            <person name="Kamihara K."/>
            <person name="Katsuta N."/>
            <person name="Sato K."/>
            <person name="Tanikawa M."/>
            <person name="Yamazaki M."/>
            <person name="Ninomiya K."/>
            <person name="Ishibashi T."/>
            <person name="Yamashita H."/>
            <person name="Murakawa K."/>
            <person name="Fujimori K."/>
            <person name="Tanai H."/>
            <person name="Kimata M."/>
            <person name="Watanabe M."/>
            <person name="Hiraoka S."/>
            <person name="Chiba Y."/>
            <person name="Ishida S."/>
            <person name="Ono Y."/>
            <person name="Takiguchi S."/>
            <person name="Watanabe S."/>
            <person name="Yosida M."/>
            <person name="Hotuta T."/>
            <person name="Kusano J."/>
            <person name="Kanehori K."/>
            <person name="Takahashi-Fujii A."/>
            <person name="Hara H."/>
            <person name="Tanase T.-O."/>
            <person name="Nomura Y."/>
            <person name="Togiya S."/>
            <person name="Komai F."/>
            <person name="Hara R."/>
            <person name="Takeuchi K."/>
            <person name="Arita M."/>
            <person name="Imose N."/>
            <person name="Musashino K."/>
            <person name="Yuuki H."/>
            <person name="Oshima A."/>
            <person name="Sasaki N."/>
            <person name="Aotsuka S."/>
            <person name="Yoshikawa Y."/>
            <person name="Matsunawa H."/>
            <person name="Ichihara T."/>
            <person name="Shiohata N."/>
            <person name="Sano S."/>
            <person name="Moriya S."/>
            <person name="Momiyama H."/>
            <person name="Satoh N."/>
            <person name="Takami S."/>
            <person name="Terashima Y."/>
            <person name="Suzuki O."/>
            <person name="Nakagawa S."/>
            <person name="Senoh A."/>
            <person name="Mizoguchi H."/>
            <person name="Goto Y."/>
            <person name="Shimizu F."/>
            <person name="Wakebe H."/>
            <person name="Hishigaki H."/>
            <person name="Watanabe T."/>
            <person name="Sugiyama A."/>
            <person name="Takemoto M."/>
            <person name="Kawakami B."/>
            <person name="Yamazaki M."/>
            <person name="Watanabe K."/>
            <person name="Kumagai A."/>
            <person name="Itakura S."/>
            <person name="Fukuzumi Y."/>
            <person name="Fujimori Y."/>
            <person name="Komiyama M."/>
            <person name="Tashiro H."/>
            <person name="Tanigami A."/>
            <person name="Fujiwara T."/>
            <person name="Ono T."/>
            <person name="Yamada K."/>
            <person name="Fujii Y."/>
            <person name="Ozaki K."/>
            <person name="Hirao M."/>
            <person name="Ohmori Y."/>
            <person name="Kawabata A."/>
            <person name="Hikiji T."/>
            <person name="Kobatake N."/>
            <person name="Inagaki H."/>
            <person name="Ikema Y."/>
            <person name="Okamoto S."/>
            <person name="Okitani R."/>
            <person name="Kawakami T."/>
            <person name="Noguchi S."/>
            <person name="Itoh T."/>
            <person name="Shigeta K."/>
            <person name="Senba T."/>
            <person name="Matsumura K."/>
            <person name="Nakajima Y."/>
            <person name="Mizuno T."/>
            <person name="Morinaga M."/>
            <person name="Sasaki M."/>
            <person name="Togashi T."/>
            <person name="Oyama M."/>
            <person name="Hata H."/>
            <person name="Watanabe M."/>
            <person name="Komatsu T."/>
            <person name="Mizushima-Sugano J."/>
            <person name="Satoh T."/>
            <person name="Shirai Y."/>
            <person name="Takahashi Y."/>
            <person name="Nakagawa K."/>
            <person name="Okumura K."/>
            <person name="Nagase T."/>
            <person name="Nomura N."/>
            <person name="Kikuchi H."/>
            <person name="Masuho Y."/>
            <person name="Yamashita R."/>
            <person name="Nakai K."/>
            <person name="Yada T."/>
            <person name="Nakamura Y."/>
            <person name="Ohara O."/>
            <person name="Isogai T."/>
            <person name="Sugano S."/>
        </authorList>
    </citation>
    <scope>NUCLEOTIDE SEQUENCE [LARGE SCALE MRNA]</scope>
    <source>
        <tissue>Thalamus</tissue>
    </source>
</reference>
<reference key="3">
    <citation type="submission" date="2004-06" db="EMBL/GenBank/DDBJ databases">
        <title>Cloning of human full open reading frames in Gateway(TM) system entry vector (pDONR201).</title>
        <authorList>
            <person name="Halleck A."/>
            <person name="Ebert L."/>
            <person name="Mkoundinya M."/>
            <person name="Schick M."/>
            <person name="Eisenstein S."/>
            <person name="Neubert P."/>
            <person name="Kstrang K."/>
            <person name="Schatten R."/>
            <person name="Shen B."/>
            <person name="Henze S."/>
            <person name="Mar W."/>
            <person name="Korn B."/>
            <person name="Zuo D."/>
            <person name="Hu Y."/>
            <person name="LaBaer J."/>
        </authorList>
    </citation>
    <scope>NUCLEOTIDE SEQUENCE [LARGE SCALE MRNA]</scope>
</reference>
<reference key="4">
    <citation type="journal article" date="2003" name="Science">
        <title>Human chromosome 7: DNA sequence and biology.</title>
        <authorList>
            <person name="Scherer S.W."/>
            <person name="Cheung J."/>
            <person name="MacDonald J.R."/>
            <person name="Osborne L.R."/>
            <person name="Nakabayashi K."/>
            <person name="Herbrick J.-A."/>
            <person name="Carson A.R."/>
            <person name="Parker-Katiraee L."/>
            <person name="Skaug J."/>
            <person name="Khaja R."/>
            <person name="Zhang J."/>
            <person name="Hudek A.K."/>
            <person name="Li M."/>
            <person name="Haddad M."/>
            <person name="Duggan G.E."/>
            <person name="Fernandez B.A."/>
            <person name="Kanematsu E."/>
            <person name="Gentles S."/>
            <person name="Christopoulos C.C."/>
            <person name="Choufani S."/>
            <person name="Kwasnicka D."/>
            <person name="Zheng X.H."/>
            <person name="Lai Z."/>
            <person name="Nusskern D.R."/>
            <person name="Zhang Q."/>
            <person name="Gu Z."/>
            <person name="Lu F."/>
            <person name="Zeesman S."/>
            <person name="Nowaczyk M.J."/>
            <person name="Teshima I."/>
            <person name="Chitayat D."/>
            <person name="Shuman C."/>
            <person name="Weksberg R."/>
            <person name="Zackai E.H."/>
            <person name="Grebe T.A."/>
            <person name="Cox S.R."/>
            <person name="Kirkpatrick S.J."/>
            <person name="Rahman N."/>
            <person name="Friedman J.M."/>
            <person name="Heng H.H.Q."/>
            <person name="Pelicci P.G."/>
            <person name="Lo-Coco F."/>
            <person name="Belloni E."/>
            <person name="Shaffer L.G."/>
            <person name="Pober B."/>
            <person name="Morton C.C."/>
            <person name="Gusella J.F."/>
            <person name="Bruns G.A.P."/>
            <person name="Korf B.R."/>
            <person name="Quade B.J."/>
            <person name="Ligon A.H."/>
            <person name="Ferguson H."/>
            <person name="Higgins A.W."/>
            <person name="Leach N.T."/>
            <person name="Herrick S.R."/>
            <person name="Lemyre E."/>
            <person name="Farra C.G."/>
            <person name="Kim H.-G."/>
            <person name="Summers A.M."/>
            <person name="Gripp K.W."/>
            <person name="Roberts W."/>
            <person name="Szatmari P."/>
            <person name="Winsor E.J.T."/>
            <person name="Grzeschik K.-H."/>
            <person name="Teebi A."/>
            <person name="Minassian B.A."/>
            <person name="Kere J."/>
            <person name="Armengol L."/>
            <person name="Pujana M.A."/>
            <person name="Estivill X."/>
            <person name="Wilson M.D."/>
            <person name="Koop B.F."/>
            <person name="Tosi S."/>
            <person name="Moore G.E."/>
            <person name="Boright A.P."/>
            <person name="Zlotorynski E."/>
            <person name="Kerem B."/>
            <person name="Kroisel P.M."/>
            <person name="Petek E."/>
            <person name="Oscier D.G."/>
            <person name="Mould S.J."/>
            <person name="Doehner H."/>
            <person name="Doehner K."/>
            <person name="Rommens J.M."/>
            <person name="Vincent J.B."/>
            <person name="Venter J.C."/>
            <person name="Li P.W."/>
            <person name="Mural R.J."/>
            <person name="Adams M.D."/>
            <person name="Tsui L.-C."/>
        </authorList>
    </citation>
    <scope>NUCLEOTIDE SEQUENCE [LARGE SCALE GENOMIC DNA]</scope>
</reference>
<reference key="5">
    <citation type="submission" date="2005-07" db="EMBL/GenBank/DDBJ databases">
        <authorList>
            <person name="Mural R.J."/>
            <person name="Istrail S."/>
            <person name="Sutton G."/>
            <person name="Florea L."/>
            <person name="Halpern A.L."/>
            <person name="Mobarry C.M."/>
            <person name="Lippert R."/>
            <person name="Walenz B."/>
            <person name="Shatkay H."/>
            <person name="Dew I."/>
            <person name="Miller J.R."/>
            <person name="Flanigan M.J."/>
            <person name="Edwards N.J."/>
            <person name="Bolanos R."/>
            <person name="Fasulo D."/>
            <person name="Halldorsson B.V."/>
            <person name="Hannenhalli S."/>
            <person name="Turner R."/>
            <person name="Yooseph S."/>
            <person name="Lu F."/>
            <person name="Nusskern D.R."/>
            <person name="Shue B.C."/>
            <person name="Zheng X.H."/>
            <person name="Zhong F."/>
            <person name="Delcher A.L."/>
            <person name="Huson D.H."/>
            <person name="Kravitz S.A."/>
            <person name="Mouchard L."/>
            <person name="Reinert K."/>
            <person name="Remington K.A."/>
            <person name="Clark A.G."/>
            <person name="Waterman M.S."/>
            <person name="Eichler E.E."/>
            <person name="Adams M.D."/>
            <person name="Hunkapiller M.W."/>
            <person name="Myers E.W."/>
            <person name="Venter J.C."/>
        </authorList>
    </citation>
    <scope>NUCLEOTIDE SEQUENCE [LARGE SCALE GENOMIC DNA]</scope>
</reference>
<reference key="6">
    <citation type="journal article" date="2004" name="Genome Res.">
        <title>The status, quality, and expansion of the NIH full-length cDNA project: the Mammalian Gene Collection (MGC).</title>
        <authorList>
            <consortium name="The MGC Project Team"/>
        </authorList>
    </citation>
    <scope>NUCLEOTIDE SEQUENCE [LARGE SCALE MRNA]</scope>
    <source>
        <tissue>Skin</tissue>
    </source>
</reference>
<reference key="7">
    <citation type="journal article" date="1998" name="J. Biol. Chem.">
        <title>Molecular cloning and expression of human and mouse tyrosylprotein sulfotransferase-2 and a tyrosylprotein sulfotransferase homologue in Caenorhabditis elegans.</title>
        <authorList>
            <person name="Ouyang Y.-B."/>
            <person name="Moore K.L."/>
        </authorList>
    </citation>
    <scope>FUNCTION</scope>
    <scope>CATALYTIC ACTIVITY</scope>
</reference>
<reference key="8">
    <citation type="journal article" date="2006" name="J. Mol. Biol.">
        <title>Human TPST1 transmembrane domain triggers enzyme dimerisation and localisation to the Golgi compartment.</title>
        <authorList>
            <person name="Goettsch S."/>
            <person name="Badea R.A."/>
            <person name="Mueller J.W."/>
            <person name="Wotzlaw C."/>
            <person name="Schoelermann B."/>
            <person name="Schulz L."/>
            <person name="Rabiller M."/>
            <person name="Bayer P."/>
            <person name="Hartmann-Fatu C."/>
        </authorList>
    </citation>
    <scope>GLYCOSYLATION AT ASN-60 AND ASN-262</scope>
    <scope>SUBUNIT</scope>
    <scope>SUBCELLULAR LOCATION</scope>
    <scope>TOPOLOGY</scope>
    <scope>MUTAGENESIS OF ASN-60 AND ASN-262</scope>
</reference>
<reference key="9">
    <citation type="journal article" date="2015" name="J. Mol. Biol.">
        <title>Heterodimers of tyrosylprotein sulfotransferases suggest existence of a higher organization level of transferases in the membrane of the trans-Golgi apparatus.</title>
        <authorList>
            <person name="Hartmann-Fatu C."/>
            <person name="Trusch F."/>
            <person name="Moll C.N."/>
            <person name="Michin I."/>
            <person name="Hassinen A."/>
            <person name="Kellokumpu S."/>
            <person name="Bayer P."/>
        </authorList>
    </citation>
    <scope>SUBCELLULAR LOCATION</scope>
    <scope>TOPOLOGY</scope>
    <scope>INTERACTION WITH TPST2</scope>
</reference>
<reference key="10">
    <citation type="journal article" date="2017" name="Sci. Rep.">
        <title>Structural basis for the broad substrate specificity of the human tyrosylprotein sulfotransferase-1.</title>
        <authorList>
            <person name="Tanaka S."/>
            <person name="Nishiyori T."/>
            <person name="Kojo H."/>
            <person name="Otsubo R."/>
            <person name="Tsuruta M."/>
            <person name="Kurogi K."/>
            <person name="Liu M.C."/>
            <person name="Suiko M."/>
            <person name="Sakakibara Y."/>
            <person name="Kakuta Y."/>
        </authorList>
    </citation>
    <scope>X-RAY CRYSTALLOGRAPHY (1.60 ANGSTROMS) OF 43-341 IN COMPLEX WITH ADENOSINE 3',5'-BISPHOSPHATE AND SUBSTRATE PEPTIDE</scope>
    <scope>FUNCTION</scope>
    <scope>CATALYTIC ACTIVITY</scope>
    <scope>SUBUNIT</scope>
    <scope>DISULFIDE BOND</scope>
</reference>
<proteinExistence type="evidence at protein level"/>
<organism>
    <name type="scientific">Homo sapiens</name>
    <name type="common">Human</name>
    <dbReference type="NCBI Taxonomy" id="9606"/>
    <lineage>
        <taxon>Eukaryota</taxon>
        <taxon>Metazoa</taxon>
        <taxon>Chordata</taxon>
        <taxon>Craniata</taxon>
        <taxon>Vertebrata</taxon>
        <taxon>Euteleostomi</taxon>
        <taxon>Mammalia</taxon>
        <taxon>Eutheria</taxon>
        <taxon>Euarchontoglires</taxon>
        <taxon>Primates</taxon>
        <taxon>Haplorrhini</taxon>
        <taxon>Catarrhini</taxon>
        <taxon>Hominidae</taxon>
        <taxon>Homo</taxon>
    </lineage>
</organism>
<feature type="chain" id="PRO_0000189826" description="Protein-tyrosine sulfotransferase 1">
    <location>
        <begin position="1"/>
        <end position="370"/>
    </location>
</feature>
<feature type="topological domain" description="Cytoplasmic" evidence="2">
    <location>
        <begin position="1"/>
        <end position="8"/>
    </location>
</feature>
<feature type="transmembrane region" description="Helical; Signal-anchor for type II membrane protein" evidence="2">
    <location>
        <begin position="9"/>
        <end position="25"/>
    </location>
</feature>
<feature type="topological domain" description="Lumenal" evidence="2">
    <location>
        <begin position="26"/>
        <end position="370"/>
    </location>
</feature>
<feature type="region of interest" description="Interaction with peptide substrate" evidence="5">
    <location>
        <begin position="102"/>
        <end position="106"/>
    </location>
</feature>
<feature type="active site" description="Proton donor/acceptor" evidence="1">
    <location>
        <position position="100"/>
    </location>
</feature>
<feature type="binding site" evidence="10 11 12">
    <location>
        <begin position="79"/>
        <end position="83"/>
    </location>
    <ligand>
        <name>3'-phosphoadenylyl sulfate</name>
        <dbReference type="ChEBI" id="CHEBI:58339"/>
    </ligand>
</feature>
<feature type="binding site" evidence="10 11 12">
    <location>
        <position position="184"/>
    </location>
    <ligand>
        <name>3'-phosphoadenylyl sulfate</name>
        <dbReference type="ChEBI" id="CHEBI:58339"/>
    </ligand>
</feature>
<feature type="binding site" evidence="10 11 12">
    <location>
        <position position="192"/>
    </location>
    <ligand>
        <name>3'-phosphoadenylyl sulfate</name>
        <dbReference type="ChEBI" id="CHEBI:58339"/>
    </ligand>
</feature>
<feature type="binding site" evidence="10 11">
    <location>
        <position position="196"/>
    </location>
    <ligand>
        <name>3'-phosphoadenylyl sulfate</name>
        <dbReference type="ChEBI" id="CHEBI:58339"/>
    </ligand>
</feature>
<feature type="binding site" evidence="10 11 12">
    <location>
        <position position="239"/>
    </location>
    <ligand>
        <name>3'-phosphoadenylyl sulfate</name>
        <dbReference type="ChEBI" id="CHEBI:58339"/>
    </ligand>
</feature>
<feature type="binding site" evidence="10 11 12">
    <location>
        <begin position="286"/>
        <end position="295"/>
    </location>
    <ligand>
        <name>3'-phosphoadenylyl sulfate</name>
        <dbReference type="ChEBI" id="CHEBI:58339"/>
    </ligand>
</feature>
<feature type="binding site" evidence="10 11 12">
    <location>
        <position position="301"/>
    </location>
    <ligand>
        <name>3'-phosphoadenylyl sulfate</name>
        <dbReference type="ChEBI" id="CHEBI:58339"/>
    </ligand>
</feature>
<feature type="site" description="Transition state stabilizer" evidence="1">
    <location>
        <position position="159"/>
    </location>
</feature>
<feature type="site" description="Transition state stabilizer" evidence="1">
    <location>
        <position position="286"/>
    </location>
</feature>
<feature type="glycosylation site" description="N-linked (GlcNAc...) asparagine" evidence="3">
    <location>
        <position position="60"/>
    </location>
</feature>
<feature type="glycosylation site" description="N-linked (GlcNAc...) asparagine" evidence="3">
    <location>
        <position position="262"/>
    </location>
</feature>
<feature type="disulfide bond" evidence="5">
    <location>
        <begin position="97"/>
        <end position="157"/>
    </location>
</feature>
<feature type="disulfide bond" evidence="5">
    <location>
        <begin position="226"/>
        <end position="234"/>
    </location>
</feature>
<feature type="mutagenesis site" description="Loss of one glycosylation site. Loss of N-glycosylation; when associated with A-262." evidence="3">
    <original>N</original>
    <variation>A</variation>
    <location>
        <position position="60"/>
    </location>
</feature>
<feature type="mutagenesis site" description="Loss of one glycosylation site. Loss of N-glycosylation; when associated with A-60." evidence="3">
    <original>N</original>
    <variation>A</variation>
    <location>
        <position position="262"/>
    </location>
</feature>
<feature type="strand" evidence="13">
    <location>
        <begin position="71"/>
        <end position="75"/>
    </location>
</feature>
<feature type="strand" evidence="13">
    <location>
        <begin position="77"/>
        <end position="81"/>
    </location>
</feature>
<feature type="helix" evidence="13">
    <location>
        <begin position="82"/>
        <end position="90"/>
    </location>
</feature>
<feature type="helix" evidence="13">
    <location>
        <begin position="103"/>
        <end position="115"/>
    </location>
</feature>
<feature type="helix" evidence="13">
    <location>
        <begin position="118"/>
        <end position="126"/>
    </location>
</feature>
<feature type="helix" evidence="13">
    <location>
        <begin position="131"/>
        <end position="148"/>
    </location>
</feature>
<feature type="strand" evidence="13">
    <location>
        <begin position="154"/>
        <end position="159"/>
    </location>
</feature>
<feature type="helix" evidence="13">
    <location>
        <begin position="161"/>
        <end position="166"/>
    </location>
</feature>
<feature type="helix" evidence="13">
    <location>
        <begin position="167"/>
        <end position="173"/>
    </location>
</feature>
<feature type="strand" evidence="13">
    <location>
        <begin position="177"/>
        <end position="183"/>
    </location>
</feature>
<feature type="helix" evidence="13">
    <location>
        <begin position="186"/>
        <end position="196"/>
    </location>
</feature>
<feature type="helix" evidence="13">
    <location>
        <begin position="208"/>
        <end position="229"/>
    </location>
</feature>
<feature type="turn" evidence="13">
    <location>
        <begin position="231"/>
        <end position="233"/>
    </location>
</feature>
<feature type="strand" evidence="13">
    <location>
        <begin position="234"/>
        <end position="238"/>
    </location>
</feature>
<feature type="helix" evidence="13">
    <location>
        <begin position="239"/>
        <end position="244"/>
    </location>
</feature>
<feature type="helix" evidence="13">
    <location>
        <begin position="246"/>
        <end position="257"/>
    </location>
</feature>
<feature type="helix" evidence="13">
    <location>
        <begin position="263"/>
        <end position="271"/>
    </location>
</feature>
<feature type="helix" evidence="13">
    <location>
        <begin position="287"/>
        <end position="290"/>
    </location>
</feature>
<feature type="turn" evidence="13">
    <location>
        <begin position="301"/>
        <end position="305"/>
    </location>
</feature>
<feature type="helix" evidence="13">
    <location>
        <begin position="308"/>
        <end position="312"/>
    </location>
</feature>
<feature type="helix" evidence="13">
    <location>
        <begin position="314"/>
        <end position="317"/>
    </location>
</feature>
<feature type="helix" evidence="13">
    <location>
        <begin position="320"/>
        <end position="323"/>
    </location>
</feature>
<feature type="strand" evidence="14">
    <location>
        <begin position="330"/>
        <end position="332"/>
    </location>
</feature>
<accession>O60507</accession>
<accession>A4D2M0</accession>
<accession>Q6FGM7</accession>
<comment type="function">
    <text evidence="5 6 7">Catalyzes the O-sulfation of tyrosine residues within acidic motifs of polypeptides, using 3'-phosphoadenylyl sulfate (PAPS) as cosubstrate.</text>
</comment>
<comment type="catalytic activity">
    <reaction evidence="5 6 7">
        <text>L-tyrosyl-[protein] + 3'-phosphoadenylyl sulfate = O-sulfo-L-tyrosine-[protein] + adenosine 3',5'-bisphosphate + H(+)</text>
        <dbReference type="Rhea" id="RHEA:16801"/>
        <dbReference type="Rhea" id="RHEA-COMP:10136"/>
        <dbReference type="Rhea" id="RHEA-COMP:11688"/>
        <dbReference type="ChEBI" id="CHEBI:15378"/>
        <dbReference type="ChEBI" id="CHEBI:46858"/>
        <dbReference type="ChEBI" id="CHEBI:58339"/>
        <dbReference type="ChEBI" id="CHEBI:58343"/>
        <dbReference type="ChEBI" id="CHEBI:65286"/>
        <dbReference type="EC" id="2.8.2.20"/>
    </reaction>
</comment>
<comment type="subunit">
    <text evidence="3 4 5">Homodimer (PubMed:16859706, PubMed:28821720). Can also form heterodimers with TPST2 (PubMed:25660941).</text>
</comment>
<comment type="subcellular location">
    <subcellularLocation>
        <location evidence="3 4">Golgi apparatus membrane</location>
        <topology evidence="4 9">Single-pass type II membrane protein</topology>
    </subcellularLocation>
</comment>
<comment type="tissue specificity">
    <text evidence="6">Ubiquitous. Detected in heart, brain, placenta, lung, liver, skeletal muscle, kidney and pancreas.</text>
</comment>
<comment type="PTM">
    <text evidence="3 6">N-glycosylated.</text>
</comment>
<comment type="similarity">
    <text evidence="8">Belongs to the protein sulfotransferase family.</text>
</comment>
<evidence type="ECO:0000250" key="1">
    <source>
        <dbReference type="UniProtKB" id="O60704"/>
    </source>
</evidence>
<evidence type="ECO:0000255" key="2"/>
<evidence type="ECO:0000269" key="3">
    <source>
    </source>
</evidence>
<evidence type="ECO:0000269" key="4">
    <source>
    </source>
</evidence>
<evidence type="ECO:0000269" key="5">
    <source>
    </source>
</evidence>
<evidence type="ECO:0000269" key="6">
    <source>
    </source>
</evidence>
<evidence type="ECO:0000269" key="7">
    <source>
    </source>
</evidence>
<evidence type="ECO:0000305" key="8"/>
<evidence type="ECO:0000305" key="9">
    <source>
    </source>
</evidence>
<evidence type="ECO:0000305" key="10">
    <source>
    </source>
</evidence>
<evidence type="ECO:0007744" key="11">
    <source>
        <dbReference type="PDB" id="5WRI"/>
    </source>
</evidence>
<evidence type="ECO:0007744" key="12">
    <source>
        <dbReference type="PDB" id="5WRJ"/>
    </source>
</evidence>
<evidence type="ECO:0007829" key="13">
    <source>
        <dbReference type="PDB" id="5WRI"/>
    </source>
</evidence>
<evidence type="ECO:0007829" key="14">
    <source>
        <dbReference type="PDB" id="5WRJ"/>
    </source>
</evidence>
<dbReference type="EC" id="2.8.2.20" evidence="5 6 7"/>
<dbReference type="EMBL" id="AF038009">
    <property type="protein sequence ID" value="AAC13552.1"/>
    <property type="molecule type" value="mRNA"/>
</dbReference>
<dbReference type="EMBL" id="AK313098">
    <property type="protein sequence ID" value="BAG35922.1"/>
    <property type="molecule type" value="mRNA"/>
</dbReference>
<dbReference type="EMBL" id="CR542060">
    <property type="protein sequence ID" value="CAG46857.1"/>
    <property type="molecule type" value="mRNA"/>
</dbReference>
<dbReference type="EMBL" id="CR542080">
    <property type="protein sequence ID" value="CAG46877.1"/>
    <property type="molecule type" value="mRNA"/>
</dbReference>
<dbReference type="EMBL" id="CH236961">
    <property type="protein sequence ID" value="EAL23739.1"/>
    <property type="molecule type" value="Genomic_DNA"/>
</dbReference>
<dbReference type="EMBL" id="CH471140">
    <property type="protein sequence ID" value="EAX07937.1"/>
    <property type="molecule type" value="Genomic_DNA"/>
</dbReference>
<dbReference type="EMBL" id="BC013188">
    <property type="protein sequence ID" value="AAH13188.1"/>
    <property type="molecule type" value="mRNA"/>
</dbReference>
<dbReference type="CCDS" id="CCDS5533.1"/>
<dbReference type="RefSeq" id="NP_003587.1">
    <property type="nucleotide sequence ID" value="NM_003596.4"/>
</dbReference>
<dbReference type="RefSeq" id="XP_016868214.1">
    <property type="nucleotide sequence ID" value="XM_017012725.1"/>
</dbReference>
<dbReference type="RefSeq" id="XP_016868215.1">
    <property type="nucleotide sequence ID" value="XM_017012726.3"/>
</dbReference>
<dbReference type="RefSeq" id="XP_016868216.1">
    <property type="nucleotide sequence ID" value="XM_017012727.3"/>
</dbReference>
<dbReference type="RefSeq" id="XP_047276914.1">
    <property type="nucleotide sequence ID" value="XM_047420958.1"/>
</dbReference>
<dbReference type="RefSeq" id="XP_047276915.1">
    <property type="nucleotide sequence ID" value="XM_047420959.1"/>
</dbReference>
<dbReference type="RefSeq" id="XP_047276916.1">
    <property type="nucleotide sequence ID" value="XM_047420960.1"/>
</dbReference>
<dbReference type="RefSeq" id="XP_047276918.1">
    <property type="nucleotide sequence ID" value="XM_047420962.1"/>
</dbReference>
<dbReference type="RefSeq" id="XP_054215202.1">
    <property type="nucleotide sequence ID" value="XM_054359227.1"/>
</dbReference>
<dbReference type="RefSeq" id="XP_054215203.1">
    <property type="nucleotide sequence ID" value="XM_054359228.1"/>
</dbReference>
<dbReference type="RefSeq" id="XP_054215204.1">
    <property type="nucleotide sequence ID" value="XM_054359229.1"/>
</dbReference>
<dbReference type="RefSeq" id="XP_054215205.1">
    <property type="nucleotide sequence ID" value="XM_054359230.1"/>
</dbReference>
<dbReference type="RefSeq" id="XP_054215206.1">
    <property type="nucleotide sequence ID" value="XM_054359231.1"/>
</dbReference>
<dbReference type="RefSeq" id="XP_054215207.1">
    <property type="nucleotide sequence ID" value="XM_054359232.1"/>
</dbReference>
<dbReference type="PDB" id="5WRI">
    <property type="method" value="X-ray"/>
    <property type="resolution" value="1.60 A"/>
    <property type="chains" value="A/B=43-341"/>
</dbReference>
<dbReference type="PDB" id="5WRJ">
    <property type="method" value="X-ray"/>
    <property type="resolution" value="2.31 A"/>
    <property type="chains" value="A/B/C/D=43-341"/>
</dbReference>
<dbReference type="PDBsum" id="5WRI"/>
<dbReference type="PDBsum" id="5WRJ"/>
<dbReference type="SMR" id="O60507"/>
<dbReference type="BioGRID" id="114038">
    <property type="interactions" value="27"/>
</dbReference>
<dbReference type="FunCoup" id="O60507">
    <property type="interactions" value="651"/>
</dbReference>
<dbReference type="IntAct" id="O60507">
    <property type="interactions" value="11"/>
</dbReference>
<dbReference type="STRING" id="9606.ENSP00000302413"/>
<dbReference type="GlyCosmos" id="O60507">
    <property type="glycosylation" value="2 sites, No reported glycans"/>
</dbReference>
<dbReference type="GlyGen" id="O60507">
    <property type="glycosylation" value="12 sites, 3 N-linked glycans (1 site), 2 O-linked glycans (9 sites)"/>
</dbReference>
<dbReference type="iPTMnet" id="O60507"/>
<dbReference type="PhosphoSitePlus" id="O60507"/>
<dbReference type="BioMuta" id="TPST1"/>
<dbReference type="jPOST" id="O60507"/>
<dbReference type="MassIVE" id="O60507"/>
<dbReference type="PaxDb" id="9606-ENSP00000302413"/>
<dbReference type="PeptideAtlas" id="O60507"/>
<dbReference type="ProteomicsDB" id="49449"/>
<dbReference type="Antibodypedia" id="35330">
    <property type="antibodies" value="156 antibodies from 20 providers"/>
</dbReference>
<dbReference type="DNASU" id="8460"/>
<dbReference type="Ensembl" id="ENST00000304842.6">
    <property type="protein sequence ID" value="ENSP00000302413.5"/>
    <property type="gene ID" value="ENSG00000169902.15"/>
</dbReference>
<dbReference type="Ensembl" id="ENST00000649664.1">
    <property type="protein sequence ID" value="ENSP00000497281.1"/>
    <property type="gene ID" value="ENSG00000169902.15"/>
</dbReference>
<dbReference type="GeneID" id="8460"/>
<dbReference type="KEGG" id="hsa:8460"/>
<dbReference type="MANE-Select" id="ENST00000304842.6">
    <property type="protein sequence ID" value="ENSP00000302413.5"/>
    <property type="RefSeq nucleotide sequence ID" value="NM_003596.4"/>
    <property type="RefSeq protein sequence ID" value="NP_003587.1"/>
</dbReference>
<dbReference type="UCSC" id="uc003tuw.4">
    <property type="organism name" value="human"/>
</dbReference>
<dbReference type="AGR" id="HGNC:12020"/>
<dbReference type="CTD" id="8460"/>
<dbReference type="DisGeNET" id="8460"/>
<dbReference type="GeneCards" id="TPST1"/>
<dbReference type="HGNC" id="HGNC:12020">
    <property type="gene designation" value="TPST1"/>
</dbReference>
<dbReference type="HPA" id="ENSG00000169902">
    <property type="expression patterns" value="Low tissue specificity"/>
</dbReference>
<dbReference type="MIM" id="603125">
    <property type="type" value="gene"/>
</dbReference>
<dbReference type="neXtProt" id="NX_O60507"/>
<dbReference type="OpenTargets" id="ENSG00000169902"/>
<dbReference type="PharmGKB" id="PA36699"/>
<dbReference type="VEuPathDB" id="HostDB:ENSG00000169902"/>
<dbReference type="eggNOG" id="KOG3988">
    <property type="taxonomic scope" value="Eukaryota"/>
</dbReference>
<dbReference type="GeneTree" id="ENSGT00390000006030"/>
<dbReference type="HOGENOM" id="CLU_046916_0_1_1"/>
<dbReference type="InParanoid" id="O60507"/>
<dbReference type="OMA" id="SQWKKSE"/>
<dbReference type="OrthoDB" id="545675at2759"/>
<dbReference type="PAN-GO" id="O60507">
    <property type="GO annotations" value="3 GO annotations based on evolutionary models"/>
</dbReference>
<dbReference type="PhylomeDB" id="O60507"/>
<dbReference type="TreeFam" id="TF312910"/>
<dbReference type="BioCyc" id="MetaCyc:HS10030-MONOMER"/>
<dbReference type="BRENDA" id="2.8.2.20">
    <property type="organism ID" value="2681"/>
</dbReference>
<dbReference type="PathwayCommons" id="O60507"/>
<dbReference type="Reactome" id="R-HSA-156584">
    <property type="pathway name" value="Cytosolic sulfonation of small molecules"/>
</dbReference>
<dbReference type="Reactome" id="R-HSA-163841">
    <property type="pathway name" value="Gamma carboxylation, hypusinylation, hydroxylation, and arylsulfatase activation"/>
</dbReference>
<dbReference type="Reactome" id="R-HSA-9674519">
    <property type="pathway name" value="Defective F8 sulfation at Y1699"/>
</dbReference>
<dbReference type="SignaLink" id="O60507"/>
<dbReference type="BioGRID-ORCS" id="8460">
    <property type="hits" value="13 hits in 1147 CRISPR screens"/>
</dbReference>
<dbReference type="ChiTaRS" id="TPST1">
    <property type="organism name" value="human"/>
</dbReference>
<dbReference type="GenomeRNAi" id="8460"/>
<dbReference type="Pharos" id="O60507">
    <property type="development level" value="Tbio"/>
</dbReference>
<dbReference type="PRO" id="PR:O60507"/>
<dbReference type="Proteomes" id="UP000005640">
    <property type="component" value="Chromosome 7"/>
</dbReference>
<dbReference type="RNAct" id="O60507">
    <property type="molecule type" value="protein"/>
</dbReference>
<dbReference type="Bgee" id="ENSG00000169902">
    <property type="expression patterns" value="Expressed in stromal cell of endometrium and 172 other cell types or tissues"/>
</dbReference>
<dbReference type="ExpressionAtlas" id="O60507">
    <property type="expression patterns" value="baseline and differential"/>
</dbReference>
<dbReference type="GO" id="GO:0005794">
    <property type="term" value="C:Golgi apparatus"/>
    <property type="evidence" value="ECO:0000318"/>
    <property type="project" value="GO_Central"/>
</dbReference>
<dbReference type="GO" id="GO:0005796">
    <property type="term" value="C:Golgi lumen"/>
    <property type="evidence" value="ECO:0007669"/>
    <property type="project" value="Ensembl"/>
</dbReference>
<dbReference type="GO" id="GO:0000139">
    <property type="term" value="C:Golgi membrane"/>
    <property type="evidence" value="ECO:0000314"/>
    <property type="project" value="UniProtKB"/>
</dbReference>
<dbReference type="GO" id="GO:0016020">
    <property type="term" value="C:membrane"/>
    <property type="evidence" value="ECO:0000304"/>
    <property type="project" value="ProtInc"/>
</dbReference>
<dbReference type="GO" id="GO:0005802">
    <property type="term" value="C:trans-Golgi network"/>
    <property type="evidence" value="ECO:0007669"/>
    <property type="project" value="Ensembl"/>
</dbReference>
<dbReference type="GO" id="GO:0042803">
    <property type="term" value="F:protein homodimerization activity"/>
    <property type="evidence" value="ECO:0000353"/>
    <property type="project" value="UniProtKB"/>
</dbReference>
<dbReference type="GO" id="GO:0008476">
    <property type="term" value="F:protein-tyrosine sulfotransferase activity"/>
    <property type="evidence" value="ECO:0000314"/>
    <property type="project" value="UniProtKB"/>
</dbReference>
<dbReference type="GO" id="GO:0050427">
    <property type="term" value="P:3'-phosphoadenosine 5'-phosphosulfate metabolic process"/>
    <property type="evidence" value="ECO:0000304"/>
    <property type="project" value="Reactome"/>
</dbReference>
<dbReference type="GO" id="GO:0043687">
    <property type="term" value="P:post-translational protein modification"/>
    <property type="evidence" value="ECO:0000314"/>
    <property type="project" value="UniProtKB"/>
</dbReference>
<dbReference type="FunFam" id="3.40.50.300:FF:000290">
    <property type="entry name" value="Protein-tyrosine sulfotransferase"/>
    <property type="match status" value="1"/>
</dbReference>
<dbReference type="Gene3D" id="3.40.50.300">
    <property type="entry name" value="P-loop containing nucleotide triphosphate hydrolases"/>
    <property type="match status" value="1"/>
</dbReference>
<dbReference type="InterPro" id="IPR027417">
    <property type="entry name" value="P-loop_NTPase"/>
</dbReference>
<dbReference type="InterPro" id="IPR026634">
    <property type="entry name" value="TPST-like"/>
</dbReference>
<dbReference type="PANTHER" id="PTHR12788:SF4">
    <property type="entry name" value="PROTEIN-TYROSINE SULFOTRANSFERASE 1"/>
    <property type="match status" value="1"/>
</dbReference>
<dbReference type="PANTHER" id="PTHR12788">
    <property type="entry name" value="PROTEIN-TYROSINE SULFOTRANSFERASE 2"/>
    <property type="match status" value="1"/>
</dbReference>
<dbReference type="Pfam" id="PF13469">
    <property type="entry name" value="Sulfotransfer_3"/>
    <property type="match status" value="1"/>
</dbReference>
<dbReference type="SUPFAM" id="SSF52540">
    <property type="entry name" value="P-loop containing nucleoside triphosphate hydrolases"/>
    <property type="match status" value="1"/>
</dbReference>
<protein>
    <recommendedName>
        <fullName>Protein-tyrosine sulfotransferase 1</fullName>
        <ecNumber evidence="5 6 7">2.8.2.20</ecNumber>
    </recommendedName>
    <alternativeName>
        <fullName>Tyrosylprotein sulfotransferase 1</fullName>
        <shortName>TPST-1</shortName>
    </alternativeName>
</protein>
<name>TPST1_HUMAN</name>